<comment type="function">
    <text evidence="1">May protect the cells against DNA damage caused by exposure to the cold-warming stress and facilitates tissue damage repair during the recovery phase.</text>
</comment>
<comment type="subcellular location">
    <subcellularLocation>
        <location evidence="1">Endoplasmic reticulum membrane</location>
        <topology evidence="2">Multi-pass membrane protein</topology>
    </subcellularLocation>
</comment>
<comment type="similarity">
    <text evidence="4">Belongs to the TMEM39 family.</text>
</comment>
<proteinExistence type="evidence at protein level"/>
<feature type="chain" id="PRO_0000279233" description="Transmembrane protein 39B">
    <location>
        <begin position="1"/>
        <end position="492"/>
    </location>
</feature>
<feature type="transmembrane region" description="Helical" evidence="2">
    <location>
        <begin position="77"/>
        <end position="97"/>
    </location>
</feature>
<feature type="transmembrane region" description="Helical" evidence="2">
    <location>
        <begin position="115"/>
        <end position="135"/>
    </location>
</feature>
<feature type="transmembrane region" description="Helical" evidence="2">
    <location>
        <begin position="153"/>
        <end position="175"/>
    </location>
</feature>
<feature type="transmembrane region" description="Helical" evidence="2">
    <location>
        <begin position="185"/>
        <end position="205"/>
    </location>
</feature>
<feature type="transmembrane region" description="Helical" evidence="2">
    <location>
        <begin position="288"/>
        <end position="308"/>
    </location>
</feature>
<feature type="transmembrane region" description="Helical" evidence="2">
    <location>
        <begin position="322"/>
        <end position="342"/>
    </location>
</feature>
<feature type="transmembrane region" description="Helical" evidence="2">
    <location>
        <begin position="421"/>
        <end position="441"/>
    </location>
</feature>
<feature type="transmembrane region" description="Helical" evidence="2">
    <location>
        <begin position="447"/>
        <end position="467"/>
    </location>
</feature>
<feature type="region of interest" description="Disordered" evidence="3">
    <location>
        <begin position="1"/>
        <end position="53"/>
    </location>
</feature>
<feature type="compositionally biased region" description="Low complexity" evidence="3">
    <location>
        <begin position="31"/>
        <end position="53"/>
    </location>
</feature>
<feature type="glycosylation site" description="N-linked (GlcNAc...) asparagine" evidence="2">
    <location>
        <position position="8"/>
    </location>
</feature>
<organism>
    <name type="scientific">Mus musculus</name>
    <name type="common">Mouse</name>
    <dbReference type="NCBI Taxonomy" id="10090"/>
    <lineage>
        <taxon>Eukaryota</taxon>
        <taxon>Metazoa</taxon>
        <taxon>Chordata</taxon>
        <taxon>Craniata</taxon>
        <taxon>Vertebrata</taxon>
        <taxon>Euteleostomi</taxon>
        <taxon>Mammalia</taxon>
        <taxon>Eutheria</taxon>
        <taxon>Euarchontoglires</taxon>
        <taxon>Glires</taxon>
        <taxon>Rodentia</taxon>
        <taxon>Myomorpha</taxon>
        <taxon>Muroidea</taxon>
        <taxon>Muridae</taxon>
        <taxon>Murinae</taxon>
        <taxon>Mus</taxon>
        <taxon>Mus</taxon>
    </lineage>
</organism>
<keyword id="KW-0903">Direct protein sequencing</keyword>
<keyword id="KW-0256">Endoplasmic reticulum</keyword>
<keyword id="KW-0325">Glycoprotein</keyword>
<keyword id="KW-0472">Membrane</keyword>
<keyword id="KW-1185">Reference proteome</keyword>
<keyword id="KW-0812">Transmembrane</keyword>
<keyword id="KW-1133">Transmembrane helix</keyword>
<evidence type="ECO:0000250" key="1">
    <source>
        <dbReference type="UniProtKB" id="Q7ZW11"/>
    </source>
</evidence>
<evidence type="ECO:0000255" key="2"/>
<evidence type="ECO:0000256" key="3">
    <source>
        <dbReference type="SAM" id="MobiDB-lite"/>
    </source>
</evidence>
<evidence type="ECO:0000305" key="4"/>
<evidence type="ECO:0000312" key="5">
    <source>
        <dbReference type="MGI" id="MGI:2682939"/>
    </source>
</evidence>
<name>TM39B_MOUSE</name>
<dbReference type="EMBL" id="AL671759">
    <property type="status" value="NOT_ANNOTATED_CDS"/>
    <property type="molecule type" value="Genomic_DNA"/>
</dbReference>
<dbReference type="EMBL" id="BC049790">
    <property type="protein sequence ID" value="AAH49790.1"/>
    <property type="molecule type" value="mRNA"/>
</dbReference>
<dbReference type="CCDS" id="CCDS18702.1"/>
<dbReference type="RefSeq" id="NP_955009.1">
    <property type="nucleotide sequence ID" value="NM_199305.2"/>
</dbReference>
<dbReference type="BioGRID" id="231021">
    <property type="interactions" value="1"/>
</dbReference>
<dbReference type="FunCoup" id="Q810L4">
    <property type="interactions" value="681"/>
</dbReference>
<dbReference type="STRING" id="10090.ENSMUSP00000099648"/>
<dbReference type="GlyCosmos" id="Q810L4">
    <property type="glycosylation" value="1 site, No reported glycans"/>
</dbReference>
<dbReference type="GlyGen" id="Q810L4">
    <property type="glycosylation" value="1 site"/>
</dbReference>
<dbReference type="iPTMnet" id="Q810L4"/>
<dbReference type="PhosphoSitePlus" id="Q810L4"/>
<dbReference type="PaxDb" id="10090-ENSMUSP00000099648"/>
<dbReference type="ProteomicsDB" id="259230"/>
<dbReference type="Antibodypedia" id="52402">
    <property type="antibodies" value="27 antibodies from 10 providers"/>
</dbReference>
<dbReference type="DNASU" id="230770"/>
<dbReference type="Ensembl" id="ENSMUST00000102588.10">
    <property type="protein sequence ID" value="ENSMUSP00000099648.4"/>
    <property type="gene ID" value="ENSMUSG00000053730.16"/>
</dbReference>
<dbReference type="GeneID" id="230770"/>
<dbReference type="KEGG" id="mmu:230770"/>
<dbReference type="UCSC" id="uc008uya.1">
    <property type="organism name" value="mouse"/>
</dbReference>
<dbReference type="AGR" id="MGI:2682939"/>
<dbReference type="CTD" id="55116"/>
<dbReference type="MGI" id="MGI:2682939">
    <property type="gene designation" value="Tmem39b"/>
</dbReference>
<dbReference type="VEuPathDB" id="HostDB:ENSMUSG00000053730"/>
<dbReference type="eggNOG" id="KOG3828">
    <property type="taxonomic scope" value="Eukaryota"/>
</dbReference>
<dbReference type="GeneTree" id="ENSGT00390000018895"/>
<dbReference type="HOGENOM" id="CLU_028992_2_0_1"/>
<dbReference type="InParanoid" id="Q810L4"/>
<dbReference type="OMA" id="WYQTISL"/>
<dbReference type="OrthoDB" id="438179at2759"/>
<dbReference type="PhylomeDB" id="Q810L4"/>
<dbReference type="TreeFam" id="TF321110"/>
<dbReference type="BioGRID-ORCS" id="230770">
    <property type="hits" value="4 hits in 77 CRISPR screens"/>
</dbReference>
<dbReference type="ChiTaRS" id="Tmem39b">
    <property type="organism name" value="mouse"/>
</dbReference>
<dbReference type="PRO" id="PR:Q810L4"/>
<dbReference type="Proteomes" id="UP000000589">
    <property type="component" value="Chromosome 4"/>
</dbReference>
<dbReference type="RNAct" id="Q810L4">
    <property type="molecule type" value="protein"/>
</dbReference>
<dbReference type="Bgee" id="ENSMUSG00000053730">
    <property type="expression patterns" value="Expressed in embryonic brain and 215 other cell types or tissues"/>
</dbReference>
<dbReference type="ExpressionAtlas" id="Q810L4">
    <property type="expression patterns" value="baseline and differential"/>
</dbReference>
<dbReference type="GO" id="GO:0005789">
    <property type="term" value="C:endoplasmic reticulum membrane"/>
    <property type="evidence" value="ECO:0000250"/>
    <property type="project" value="UniProtKB"/>
</dbReference>
<dbReference type="InterPro" id="IPR019397">
    <property type="entry name" value="Uncharacterised_TMEM39"/>
</dbReference>
<dbReference type="PANTHER" id="PTHR12995">
    <property type="entry name" value="FI21814P1"/>
    <property type="match status" value="1"/>
</dbReference>
<dbReference type="PANTHER" id="PTHR12995:SF2">
    <property type="entry name" value="TRANSMEMBRANE PROTEIN 39B"/>
    <property type="match status" value="1"/>
</dbReference>
<dbReference type="Pfam" id="PF10271">
    <property type="entry name" value="Tmp39"/>
    <property type="match status" value="1"/>
</dbReference>
<reference key="1">
    <citation type="journal article" date="2009" name="PLoS Biol.">
        <title>Lineage-specific biology revealed by a finished genome assembly of the mouse.</title>
        <authorList>
            <person name="Church D.M."/>
            <person name="Goodstadt L."/>
            <person name="Hillier L.W."/>
            <person name="Zody M.C."/>
            <person name="Goldstein S."/>
            <person name="She X."/>
            <person name="Bult C.J."/>
            <person name="Agarwala R."/>
            <person name="Cherry J.L."/>
            <person name="DiCuccio M."/>
            <person name="Hlavina W."/>
            <person name="Kapustin Y."/>
            <person name="Meric P."/>
            <person name="Maglott D."/>
            <person name="Birtle Z."/>
            <person name="Marques A.C."/>
            <person name="Graves T."/>
            <person name="Zhou S."/>
            <person name="Teague B."/>
            <person name="Potamousis K."/>
            <person name="Churas C."/>
            <person name="Place M."/>
            <person name="Herschleb J."/>
            <person name="Runnheim R."/>
            <person name="Forrest D."/>
            <person name="Amos-Landgraf J."/>
            <person name="Schwartz D.C."/>
            <person name="Cheng Z."/>
            <person name="Lindblad-Toh K."/>
            <person name="Eichler E.E."/>
            <person name="Ponting C.P."/>
        </authorList>
    </citation>
    <scope>NUCLEOTIDE SEQUENCE [LARGE SCALE GENOMIC DNA]</scope>
    <source>
        <strain>C57BL/6J</strain>
    </source>
</reference>
<reference key="2">
    <citation type="journal article" date="2004" name="Genome Res.">
        <title>The status, quality, and expansion of the NIH full-length cDNA project: the Mammalian Gene Collection (MGC).</title>
        <authorList>
            <consortium name="The MGC Project Team"/>
        </authorList>
    </citation>
    <scope>NUCLEOTIDE SEQUENCE [LARGE SCALE MRNA]</scope>
    <source>
        <tissue>Embryo</tissue>
    </source>
</reference>
<reference key="3">
    <citation type="submission" date="2009-01" db="UniProtKB">
        <authorList>
            <person name="Lubec G."/>
            <person name="Sunyer B."/>
            <person name="Chen W.-Q."/>
        </authorList>
    </citation>
    <scope>PROTEIN SEQUENCE OF 227-236</scope>
    <scope>IDENTIFICATION BY MASS SPECTROMETRY</scope>
    <source>
        <strain>OF1</strain>
        <tissue>Hippocampus</tissue>
    </source>
</reference>
<protein>
    <recommendedName>
        <fullName evidence="4">Transmembrane protein 39B</fullName>
    </recommendedName>
</protein>
<accession>Q810L4</accession>
<sequence length="492" mass="56377">MGGRRGPNRTSYYRNPLCEPGSSGASGGGHSSSASVSSVRSRSRTTSGTGLSSPPLAAQTVVPLQHCKIPELPVQASILFELQLFFCQLIALFVHYINIYKTVWWYPPSHPPSHTSLNFHLIDFNLLMVTAIVLGRRFIGSIVKEASQRGKVSLFRSILLFLTRFTVLTATGWSLCRSLIHLFRTYSFLNLLFLCYPFGMYIPFLQLNYDLRKTNLFTHMASMGPREAVSGLARSRDYFLTLRETWKQHTRQLYGPEAMPTHACCLSPSLIRNEVEFLKMDFNWRMKEVLVSSMLSAYYVAFVPVWFVKNTHYYDKRWSCELFLLVSISTSVILMQHLLPASYCDLLHKAAAHLGCWQKVDPALCSNVLQHPWTEECMWPQGVLVKHSKNVYKAVGHYNVAIPSDVSHFRFHFFFSNPLRILNILLLLEGAVIVYQLYSLMSSEKWHQTISLALILFSNYYAFFKLLRDRLVLGKAYSYSASPQRDLDHRFS</sequence>
<gene>
    <name evidence="5" type="primary">Tmem39b</name>
</gene>